<reference key="1">
    <citation type="journal article" date="2000" name="Nature">
        <title>Sequence and analysis of chromosome 1 of the plant Arabidopsis thaliana.</title>
        <authorList>
            <person name="Theologis A."/>
            <person name="Ecker J.R."/>
            <person name="Palm C.J."/>
            <person name="Federspiel N.A."/>
            <person name="Kaul S."/>
            <person name="White O."/>
            <person name="Alonso J."/>
            <person name="Altafi H."/>
            <person name="Araujo R."/>
            <person name="Bowman C.L."/>
            <person name="Brooks S.Y."/>
            <person name="Buehler E."/>
            <person name="Chan A."/>
            <person name="Chao Q."/>
            <person name="Chen H."/>
            <person name="Cheuk R.F."/>
            <person name="Chin C.W."/>
            <person name="Chung M.K."/>
            <person name="Conn L."/>
            <person name="Conway A.B."/>
            <person name="Conway A.R."/>
            <person name="Creasy T.H."/>
            <person name="Dewar K."/>
            <person name="Dunn P."/>
            <person name="Etgu P."/>
            <person name="Feldblyum T.V."/>
            <person name="Feng J.-D."/>
            <person name="Fong B."/>
            <person name="Fujii C.Y."/>
            <person name="Gill J.E."/>
            <person name="Goldsmith A.D."/>
            <person name="Haas B."/>
            <person name="Hansen N.F."/>
            <person name="Hughes B."/>
            <person name="Huizar L."/>
            <person name="Hunter J.L."/>
            <person name="Jenkins J."/>
            <person name="Johnson-Hopson C."/>
            <person name="Khan S."/>
            <person name="Khaykin E."/>
            <person name="Kim C.J."/>
            <person name="Koo H.L."/>
            <person name="Kremenetskaia I."/>
            <person name="Kurtz D.B."/>
            <person name="Kwan A."/>
            <person name="Lam B."/>
            <person name="Langin-Hooper S."/>
            <person name="Lee A."/>
            <person name="Lee J.M."/>
            <person name="Lenz C.A."/>
            <person name="Li J.H."/>
            <person name="Li Y.-P."/>
            <person name="Lin X."/>
            <person name="Liu S.X."/>
            <person name="Liu Z.A."/>
            <person name="Luros J.S."/>
            <person name="Maiti R."/>
            <person name="Marziali A."/>
            <person name="Militscher J."/>
            <person name="Miranda M."/>
            <person name="Nguyen M."/>
            <person name="Nierman W.C."/>
            <person name="Osborne B.I."/>
            <person name="Pai G."/>
            <person name="Peterson J."/>
            <person name="Pham P.K."/>
            <person name="Rizzo M."/>
            <person name="Rooney T."/>
            <person name="Rowley D."/>
            <person name="Sakano H."/>
            <person name="Salzberg S.L."/>
            <person name="Schwartz J.R."/>
            <person name="Shinn P."/>
            <person name="Southwick A.M."/>
            <person name="Sun H."/>
            <person name="Tallon L.J."/>
            <person name="Tambunga G."/>
            <person name="Toriumi M.J."/>
            <person name="Town C.D."/>
            <person name="Utterback T."/>
            <person name="Van Aken S."/>
            <person name="Vaysberg M."/>
            <person name="Vysotskaia V.S."/>
            <person name="Walker M."/>
            <person name="Wu D."/>
            <person name="Yu G."/>
            <person name="Fraser C.M."/>
            <person name="Venter J.C."/>
            <person name="Davis R.W."/>
        </authorList>
    </citation>
    <scope>NUCLEOTIDE SEQUENCE [LARGE SCALE GENOMIC DNA]</scope>
    <source>
        <strain>cv. Columbia</strain>
    </source>
</reference>
<reference key="2">
    <citation type="journal article" date="2017" name="Plant J.">
        <title>Araport11: a complete reannotation of the Arabidopsis thaliana reference genome.</title>
        <authorList>
            <person name="Cheng C.Y."/>
            <person name="Krishnakumar V."/>
            <person name="Chan A.P."/>
            <person name="Thibaud-Nissen F."/>
            <person name="Schobel S."/>
            <person name="Town C.D."/>
        </authorList>
    </citation>
    <scope>GENOME REANNOTATION</scope>
    <source>
        <strain>cv. Columbia</strain>
    </source>
</reference>
<reference key="3">
    <citation type="journal article" date="2004" name="Genome Res.">
        <title>Whole genome sequence comparisons and 'full-length' cDNA sequences: a combined approach to evaluate and improve Arabidopsis genome annotation.</title>
        <authorList>
            <person name="Castelli V."/>
            <person name="Aury J.-M."/>
            <person name="Jaillon O."/>
            <person name="Wincker P."/>
            <person name="Clepet C."/>
            <person name="Menard M."/>
            <person name="Cruaud C."/>
            <person name="Quetier F."/>
            <person name="Scarpelli C."/>
            <person name="Schaechter V."/>
            <person name="Temple G."/>
            <person name="Caboche M."/>
            <person name="Weissenbach J."/>
            <person name="Salanoubat M."/>
        </authorList>
    </citation>
    <scope>NUCLEOTIDE SEQUENCE [LARGE SCALE MRNA] OF 1-192</scope>
    <source>
        <strain>cv. Columbia</strain>
    </source>
</reference>
<reference key="4">
    <citation type="journal article" date="2003" name="Plant Sci.">
        <title>The BAG-family proteins in Arabidopsis thaliana.</title>
        <authorList>
            <person name="Juqiang Y."/>
            <person name="Cixin H."/>
            <person name="Hong Z."/>
        </authorList>
    </citation>
    <scope>GENE FAMILY</scope>
    <scope>NOMENCLATURE</scope>
</reference>
<reference key="5">
    <citation type="journal article" date="2006" name="Cell Death Differ.">
        <title>AtBAG6, a novel calmodulin-binding protein, induces programmed cell death in yeast and plants.</title>
        <authorList>
            <person name="Kang C.H."/>
            <person name="Jung W.Y."/>
            <person name="Kang Y.H."/>
            <person name="Kim J.Y."/>
            <person name="Kim D.G."/>
            <person name="Jeong J.C."/>
            <person name="Baek D.W."/>
            <person name="Jin J.B."/>
            <person name="Lee J.Y."/>
            <person name="Kim M.O."/>
            <person name="Chung W.S."/>
            <person name="Mengiste T."/>
            <person name="Koiwa H."/>
            <person name="Kwak S.S."/>
            <person name="Bahk J.D."/>
            <person name="Lee S.Y."/>
            <person name="Nam J.S."/>
            <person name="Yun D.J."/>
            <person name="Cho M.J."/>
        </authorList>
    </citation>
    <scope>INTERACTION WITH HSP70-1</scope>
</reference>
<reference key="6">
    <citation type="journal article" date="2006" name="J. Biol. Chem.">
        <title>Identification and functional characterization of the BAG protein family in Arabidopsis thaliana.</title>
        <authorList>
            <person name="Doukhanina E.V."/>
            <person name="Chen S."/>
            <person name="van der Zalm E."/>
            <person name="Godzik A."/>
            <person name="Reed J."/>
            <person name="Dickman M.B."/>
        </authorList>
    </citation>
    <scope>GENE FAMILY</scope>
    <scope>INDUCTION</scope>
</reference>
<comment type="function">
    <text evidence="1">Co-chaperone that regulates diverse cellular pathways, such as programmed cell death and stress responses.</text>
</comment>
<comment type="subunit">
    <text evidence="1 5">Binds to the ATPase domain of HSP70/HSC70 chaperones (By similarity). Interacts with HSP70-1.</text>
</comment>
<comment type="subcellular location">
    <subcellularLocation>
        <location evidence="7">Mitochondrion</location>
    </subcellularLocation>
</comment>
<comment type="induction">
    <text evidence="6">By calcium.</text>
</comment>
<comment type="domain">
    <text evidence="1">IQ domain mediates interaction with calmodulin.</text>
</comment>
<keyword id="KW-0112">Calmodulin-binding</keyword>
<keyword id="KW-0143">Chaperone</keyword>
<keyword id="KW-0496">Mitochondrion</keyword>
<keyword id="KW-1185">Reference proteome</keyword>
<keyword id="KW-0809">Transit peptide</keyword>
<protein>
    <recommendedName>
        <fullName>BAG family molecular chaperone regulator 5, mitochondrial</fullName>
    </recommendedName>
    <alternativeName>
        <fullName>Bcl-2-associated athanogene 5</fullName>
    </alternativeName>
</protein>
<organism>
    <name type="scientific">Arabidopsis thaliana</name>
    <name type="common">Mouse-ear cress</name>
    <dbReference type="NCBI Taxonomy" id="3702"/>
    <lineage>
        <taxon>Eukaryota</taxon>
        <taxon>Viridiplantae</taxon>
        <taxon>Streptophyta</taxon>
        <taxon>Embryophyta</taxon>
        <taxon>Tracheophyta</taxon>
        <taxon>Spermatophyta</taxon>
        <taxon>Magnoliopsida</taxon>
        <taxon>eudicotyledons</taxon>
        <taxon>Gunneridae</taxon>
        <taxon>Pentapetalae</taxon>
        <taxon>rosids</taxon>
        <taxon>malvids</taxon>
        <taxon>Brassicales</taxon>
        <taxon>Brassicaceae</taxon>
        <taxon>Camelineae</taxon>
        <taxon>Arabidopsis</taxon>
    </lineage>
</organism>
<gene>
    <name type="primary">BAG5</name>
    <name type="ordered locus">At1g12060</name>
    <name type="ORF">F12F1.7</name>
</gene>
<name>BAG5_ARATH</name>
<proteinExistence type="evidence at protein level"/>
<feature type="transit peptide" description="Mitochondrion" evidence="2">
    <location>
        <begin position="1"/>
        <end position="14"/>
    </location>
</feature>
<feature type="chain" id="PRO_0000415525" description="BAG family molecular chaperone regulator 5, mitochondrial">
    <location>
        <begin position="15"/>
        <end position="215"/>
    </location>
</feature>
<feature type="domain" description="IQ" evidence="3">
    <location>
        <begin position="50"/>
        <end position="79"/>
    </location>
</feature>
<feature type="domain" description="BAG" evidence="4">
    <location>
        <begin position="72"/>
        <end position="149"/>
    </location>
</feature>
<sequence length="215" mass="24787">MKRSRKFSSSTTTTTVIHTFYNDHTTPPATKEIPIETPLPATKANVKTNATAAAARIQSGYRSYRIRNLYKKISSINREANRVQSIIQRQETVDAIRSDEKERLRMNETLMALLLKLDSVPGLDPTIREARRKVSRKIVGMQEILDSISETKDEIQWWNYNDLGGVDSGQGGGAWPLYWEEAVEEEMCRERGGEEMERFCAQYLGFRCFQRFLRE</sequence>
<accession>O65373</accession>
<evidence type="ECO:0000250" key="1"/>
<evidence type="ECO:0000255" key="2"/>
<evidence type="ECO:0000255" key="3">
    <source>
        <dbReference type="PROSITE-ProRule" id="PRU00116"/>
    </source>
</evidence>
<evidence type="ECO:0000255" key="4">
    <source>
        <dbReference type="PROSITE-ProRule" id="PRU00369"/>
    </source>
</evidence>
<evidence type="ECO:0000269" key="5">
    <source>
    </source>
</evidence>
<evidence type="ECO:0000269" key="6">
    <source>
    </source>
</evidence>
<evidence type="ECO:0000305" key="7"/>
<dbReference type="EMBL" id="AC002131">
    <property type="protein sequence ID" value="AAC17606.1"/>
    <property type="molecule type" value="Genomic_DNA"/>
</dbReference>
<dbReference type="EMBL" id="CP002684">
    <property type="protein sequence ID" value="AEE28831.1"/>
    <property type="molecule type" value="Genomic_DNA"/>
</dbReference>
<dbReference type="EMBL" id="BX821823">
    <property type="status" value="NOT_ANNOTATED_CDS"/>
    <property type="molecule type" value="mRNA"/>
</dbReference>
<dbReference type="PIR" id="G86255">
    <property type="entry name" value="G86255"/>
</dbReference>
<dbReference type="RefSeq" id="NP_172670.2">
    <property type="nucleotide sequence ID" value="NM_101078.3"/>
</dbReference>
<dbReference type="SMR" id="O65373"/>
<dbReference type="BioGRID" id="22998">
    <property type="interactions" value="1"/>
</dbReference>
<dbReference type="FunCoup" id="O65373">
    <property type="interactions" value="91"/>
</dbReference>
<dbReference type="IntAct" id="O65373">
    <property type="interactions" value="1"/>
</dbReference>
<dbReference type="STRING" id="3702.O65373"/>
<dbReference type="PaxDb" id="3702-AT1G12060.1"/>
<dbReference type="ProteomicsDB" id="240811"/>
<dbReference type="EnsemblPlants" id="AT1G12060.1">
    <property type="protein sequence ID" value="AT1G12060.1"/>
    <property type="gene ID" value="AT1G12060"/>
</dbReference>
<dbReference type="GeneID" id="837758"/>
<dbReference type="Gramene" id="AT1G12060.1">
    <property type="protein sequence ID" value="AT1G12060.1"/>
    <property type="gene ID" value="AT1G12060"/>
</dbReference>
<dbReference type="KEGG" id="ath:AT1G12060"/>
<dbReference type="Araport" id="AT1G12060"/>
<dbReference type="TAIR" id="AT1G12060">
    <property type="gene designation" value="BAG5"/>
</dbReference>
<dbReference type="eggNOG" id="ENOG502RYR9">
    <property type="taxonomic scope" value="Eukaryota"/>
</dbReference>
<dbReference type="HOGENOM" id="CLU_1302474_0_0_1"/>
<dbReference type="InParanoid" id="O65373"/>
<dbReference type="OMA" id="MEVCKER"/>
<dbReference type="OrthoDB" id="1907216at2759"/>
<dbReference type="PhylomeDB" id="O65373"/>
<dbReference type="PRO" id="PR:O65373"/>
<dbReference type="Proteomes" id="UP000006548">
    <property type="component" value="Chromosome 1"/>
</dbReference>
<dbReference type="ExpressionAtlas" id="O65373">
    <property type="expression patterns" value="baseline and differential"/>
</dbReference>
<dbReference type="GO" id="GO:0005739">
    <property type="term" value="C:mitochondrion"/>
    <property type="evidence" value="ECO:0007669"/>
    <property type="project" value="UniProtKB-SubCell"/>
</dbReference>
<dbReference type="GO" id="GO:0005516">
    <property type="term" value="F:calmodulin binding"/>
    <property type="evidence" value="ECO:0007669"/>
    <property type="project" value="UniProtKB-KW"/>
</dbReference>
<dbReference type="GO" id="GO:0051087">
    <property type="term" value="F:protein-folding chaperone binding"/>
    <property type="evidence" value="ECO:0007669"/>
    <property type="project" value="InterPro"/>
</dbReference>
<dbReference type="FunFam" id="1.20.58.120:FF:000013">
    <property type="entry name" value="BAG family molecular chaperone regulator 5, mitochondrial"/>
    <property type="match status" value="1"/>
</dbReference>
<dbReference type="Gene3D" id="1.20.58.120">
    <property type="entry name" value="BAG domain"/>
    <property type="match status" value="1"/>
</dbReference>
<dbReference type="InterPro" id="IPR040400">
    <property type="entry name" value="BAG5/6/7/8"/>
</dbReference>
<dbReference type="InterPro" id="IPR036533">
    <property type="entry name" value="BAG_dom_sf"/>
</dbReference>
<dbReference type="InterPro" id="IPR003103">
    <property type="entry name" value="BAG_domain"/>
</dbReference>
<dbReference type="PANTHER" id="PTHR33322">
    <property type="entry name" value="BAG DOMAIN CONTAINING PROTEIN, EXPRESSED"/>
    <property type="match status" value="1"/>
</dbReference>
<dbReference type="PANTHER" id="PTHR33322:SF8">
    <property type="entry name" value="BAG FAMILY MOLECULAR CHAPERONE REGULATOR 5, MITOCHONDRIAL"/>
    <property type="match status" value="1"/>
</dbReference>
<dbReference type="Pfam" id="PF02179">
    <property type="entry name" value="BAG"/>
    <property type="match status" value="1"/>
</dbReference>
<dbReference type="SMART" id="SM00264">
    <property type="entry name" value="BAG"/>
    <property type="match status" value="1"/>
</dbReference>
<dbReference type="SUPFAM" id="SSF63491">
    <property type="entry name" value="BAG domain"/>
    <property type="match status" value="1"/>
</dbReference>
<dbReference type="PROSITE" id="PS51035">
    <property type="entry name" value="BAG"/>
    <property type="match status" value="1"/>
</dbReference>
<dbReference type="PROSITE" id="PS50096">
    <property type="entry name" value="IQ"/>
    <property type="match status" value="1"/>
</dbReference>